<gene>
    <name evidence="1" type="primary">leuD</name>
    <name type="ordered locus">Tgr7_1246</name>
</gene>
<protein>
    <recommendedName>
        <fullName evidence="1">3-isopropylmalate dehydratase small subunit</fullName>
        <ecNumber evidence="1">4.2.1.33</ecNumber>
    </recommendedName>
    <alternativeName>
        <fullName evidence="1">Alpha-IPM isomerase</fullName>
        <shortName evidence="1">IPMI</shortName>
    </alternativeName>
    <alternativeName>
        <fullName evidence="1">Isopropylmalate isomerase</fullName>
    </alternativeName>
</protein>
<organism>
    <name type="scientific">Thioalkalivibrio sulfidiphilus (strain HL-EbGR7)</name>
    <dbReference type="NCBI Taxonomy" id="396588"/>
    <lineage>
        <taxon>Bacteria</taxon>
        <taxon>Pseudomonadati</taxon>
        <taxon>Pseudomonadota</taxon>
        <taxon>Gammaproteobacteria</taxon>
        <taxon>Chromatiales</taxon>
        <taxon>Ectothiorhodospiraceae</taxon>
        <taxon>Thioalkalivibrio</taxon>
    </lineage>
</organism>
<comment type="function">
    <text evidence="1">Catalyzes the isomerization between 2-isopropylmalate and 3-isopropylmalate, via the formation of 2-isopropylmaleate.</text>
</comment>
<comment type="catalytic activity">
    <reaction evidence="1">
        <text>(2R,3S)-3-isopropylmalate = (2S)-2-isopropylmalate</text>
        <dbReference type="Rhea" id="RHEA:32287"/>
        <dbReference type="ChEBI" id="CHEBI:1178"/>
        <dbReference type="ChEBI" id="CHEBI:35121"/>
        <dbReference type="EC" id="4.2.1.33"/>
    </reaction>
</comment>
<comment type="pathway">
    <text evidence="1">Amino-acid biosynthesis; L-leucine biosynthesis; L-leucine from 3-methyl-2-oxobutanoate: step 2/4.</text>
</comment>
<comment type="subunit">
    <text evidence="1">Heterodimer of LeuC and LeuD.</text>
</comment>
<comment type="similarity">
    <text evidence="1">Belongs to the LeuD family. LeuD type 1 subfamily.</text>
</comment>
<dbReference type="EC" id="4.2.1.33" evidence="1"/>
<dbReference type="EMBL" id="CP001339">
    <property type="protein sequence ID" value="ACL72332.1"/>
    <property type="molecule type" value="Genomic_DNA"/>
</dbReference>
<dbReference type="RefSeq" id="WP_012637815.1">
    <property type="nucleotide sequence ID" value="NC_011901.1"/>
</dbReference>
<dbReference type="SMR" id="B8GQD7"/>
<dbReference type="STRING" id="396588.Tgr7_1246"/>
<dbReference type="KEGG" id="tgr:Tgr7_1246"/>
<dbReference type="eggNOG" id="COG0066">
    <property type="taxonomic scope" value="Bacteria"/>
</dbReference>
<dbReference type="HOGENOM" id="CLU_081378_0_3_6"/>
<dbReference type="OrthoDB" id="9777465at2"/>
<dbReference type="UniPathway" id="UPA00048">
    <property type="reaction ID" value="UER00071"/>
</dbReference>
<dbReference type="Proteomes" id="UP000002383">
    <property type="component" value="Chromosome"/>
</dbReference>
<dbReference type="GO" id="GO:0009316">
    <property type="term" value="C:3-isopropylmalate dehydratase complex"/>
    <property type="evidence" value="ECO:0007669"/>
    <property type="project" value="InterPro"/>
</dbReference>
<dbReference type="GO" id="GO:0003861">
    <property type="term" value="F:3-isopropylmalate dehydratase activity"/>
    <property type="evidence" value="ECO:0007669"/>
    <property type="project" value="UniProtKB-UniRule"/>
</dbReference>
<dbReference type="GO" id="GO:0009098">
    <property type="term" value="P:L-leucine biosynthetic process"/>
    <property type="evidence" value="ECO:0007669"/>
    <property type="project" value="UniProtKB-UniRule"/>
</dbReference>
<dbReference type="CDD" id="cd01577">
    <property type="entry name" value="IPMI_Swivel"/>
    <property type="match status" value="1"/>
</dbReference>
<dbReference type="FunFam" id="3.20.19.10:FF:000003">
    <property type="entry name" value="3-isopropylmalate dehydratase small subunit"/>
    <property type="match status" value="1"/>
</dbReference>
<dbReference type="Gene3D" id="3.20.19.10">
    <property type="entry name" value="Aconitase, domain 4"/>
    <property type="match status" value="1"/>
</dbReference>
<dbReference type="HAMAP" id="MF_01031">
    <property type="entry name" value="LeuD_type1"/>
    <property type="match status" value="1"/>
</dbReference>
<dbReference type="InterPro" id="IPR004431">
    <property type="entry name" value="3-IsopropMal_deHydase_ssu"/>
</dbReference>
<dbReference type="InterPro" id="IPR015928">
    <property type="entry name" value="Aconitase/3IPM_dehydase_swvl"/>
</dbReference>
<dbReference type="InterPro" id="IPR000573">
    <property type="entry name" value="AconitaseA/IPMdHydase_ssu_swvl"/>
</dbReference>
<dbReference type="InterPro" id="IPR033940">
    <property type="entry name" value="IPMI_Swivel"/>
</dbReference>
<dbReference type="InterPro" id="IPR050075">
    <property type="entry name" value="LeuD"/>
</dbReference>
<dbReference type="NCBIfam" id="TIGR00171">
    <property type="entry name" value="leuD"/>
    <property type="match status" value="1"/>
</dbReference>
<dbReference type="NCBIfam" id="NF002458">
    <property type="entry name" value="PRK01641.1"/>
    <property type="match status" value="1"/>
</dbReference>
<dbReference type="PANTHER" id="PTHR43345:SF5">
    <property type="entry name" value="3-ISOPROPYLMALATE DEHYDRATASE SMALL SUBUNIT"/>
    <property type="match status" value="1"/>
</dbReference>
<dbReference type="PANTHER" id="PTHR43345">
    <property type="entry name" value="3-ISOPROPYLMALATE DEHYDRATASE SMALL SUBUNIT 2-RELATED-RELATED"/>
    <property type="match status" value="1"/>
</dbReference>
<dbReference type="Pfam" id="PF00694">
    <property type="entry name" value="Aconitase_C"/>
    <property type="match status" value="1"/>
</dbReference>
<dbReference type="SUPFAM" id="SSF52016">
    <property type="entry name" value="LeuD/IlvD-like"/>
    <property type="match status" value="1"/>
</dbReference>
<keyword id="KW-0028">Amino-acid biosynthesis</keyword>
<keyword id="KW-0100">Branched-chain amino acid biosynthesis</keyword>
<keyword id="KW-0432">Leucine biosynthesis</keyword>
<keyword id="KW-0456">Lyase</keyword>
<keyword id="KW-1185">Reference proteome</keyword>
<accession>B8GQD7</accession>
<feature type="chain" id="PRO_1000149425" description="3-isopropylmalate dehydratase small subunit">
    <location>
        <begin position="1"/>
        <end position="212"/>
    </location>
</feature>
<evidence type="ECO:0000255" key="1">
    <source>
        <dbReference type="HAMAP-Rule" id="MF_01031"/>
    </source>
</evidence>
<proteinExistence type="inferred from homology"/>
<name>LEUD_THISH</name>
<reference key="1">
    <citation type="journal article" date="2011" name="Stand. Genomic Sci.">
        <title>Complete genome sequence of 'Thioalkalivibrio sulfidophilus' HL-EbGr7.</title>
        <authorList>
            <person name="Muyzer G."/>
            <person name="Sorokin D.Y."/>
            <person name="Mavromatis K."/>
            <person name="Lapidus A."/>
            <person name="Clum A."/>
            <person name="Ivanova N."/>
            <person name="Pati A."/>
            <person name="d'Haeseleer P."/>
            <person name="Woyke T."/>
            <person name="Kyrpides N.C."/>
        </authorList>
    </citation>
    <scope>NUCLEOTIDE SEQUENCE [LARGE SCALE GENOMIC DNA]</scope>
    <source>
        <strain>HL-EbGR7</strain>
    </source>
</reference>
<sequence length="212" mass="23902">MKPLTTVDGLVLPLDRSNVDTDAIIPKQYLKSVKRTGFGPNLFDDWRYLEPGEPGMDHSARKPNPDFVLNAPRYQGAEILLARKNFGCGSSREHAVWALTDYGIRVVIAPSFADIFFGNSFKNGLLPIVLDEAVVDRLFQEVEATEGYRLKVDLAEQTVTTPSGEAFPFEVGEFHKYCLLNGLDDIGLTLQHADEIRAYEQRRRAEAPWLFR</sequence>